<dbReference type="EMBL" id="CP001392">
    <property type="protein sequence ID" value="ACM31781.1"/>
    <property type="molecule type" value="Genomic_DNA"/>
</dbReference>
<dbReference type="RefSeq" id="WP_012655375.1">
    <property type="nucleotide sequence ID" value="NC_011992.1"/>
</dbReference>
<dbReference type="SMR" id="B9MB97"/>
<dbReference type="GeneID" id="84683188"/>
<dbReference type="KEGG" id="dia:Dtpsy_0297"/>
<dbReference type="eggNOG" id="COG0356">
    <property type="taxonomic scope" value="Bacteria"/>
</dbReference>
<dbReference type="HOGENOM" id="CLU_041018_1_0_4"/>
<dbReference type="Proteomes" id="UP000000450">
    <property type="component" value="Chromosome"/>
</dbReference>
<dbReference type="GO" id="GO:0005886">
    <property type="term" value="C:plasma membrane"/>
    <property type="evidence" value="ECO:0007669"/>
    <property type="project" value="UniProtKB-SubCell"/>
</dbReference>
<dbReference type="GO" id="GO:0045259">
    <property type="term" value="C:proton-transporting ATP synthase complex"/>
    <property type="evidence" value="ECO:0007669"/>
    <property type="project" value="UniProtKB-KW"/>
</dbReference>
<dbReference type="GO" id="GO:0046933">
    <property type="term" value="F:proton-transporting ATP synthase activity, rotational mechanism"/>
    <property type="evidence" value="ECO:0007669"/>
    <property type="project" value="UniProtKB-UniRule"/>
</dbReference>
<dbReference type="GO" id="GO:0042777">
    <property type="term" value="P:proton motive force-driven plasma membrane ATP synthesis"/>
    <property type="evidence" value="ECO:0007669"/>
    <property type="project" value="TreeGrafter"/>
</dbReference>
<dbReference type="CDD" id="cd00310">
    <property type="entry name" value="ATP-synt_Fo_a_6"/>
    <property type="match status" value="1"/>
</dbReference>
<dbReference type="FunFam" id="1.20.120.220:FF:000002">
    <property type="entry name" value="ATP synthase subunit a"/>
    <property type="match status" value="1"/>
</dbReference>
<dbReference type="Gene3D" id="1.20.120.220">
    <property type="entry name" value="ATP synthase, F0 complex, subunit A"/>
    <property type="match status" value="1"/>
</dbReference>
<dbReference type="HAMAP" id="MF_01393">
    <property type="entry name" value="ATP_synth_a_bact"/>
    <property type="match status" value="1"/>
</dbReference>
<dbReference type="InterPro" id="IPR045082">
    <property type="entry name" value="ATP_syn_F0_a_bact/chloroplast"/>
</dbReference>
<dbReference type="InterPro" id="IPR000568">
    <property type="entry name" value="ATP_synth_F0_asu"/>
</dbReference>
<dbReference type="InterPro" id="IPR023011">
    <property type="entry name" value="ATP_synth_F0_asu_AS"/>
</dbReference>
<dbReference type="InterPro" id="IPR035908">
    <property type="entry name" value="F0_ATP_A_sf"/>
</dbReference>
<dbReference type="NCBIfam" id="TIGR01131">
    <property type="entry name" value="ATP_synt_6_or_A"/>
    <property type="match status" value="1"/>
</dbReference>
<dbReference type="NCBIfam" id="NF004477">
    <property type="entry name" value="PRK05815.1-1"/>
    <property type="match status" value="1"/>
</dbReference>
<dbReference type="PANTHER" id="PTHR42823">
    <property type="entry name" value="ATP SYNTHASE SUBUNIT A, CHLOROPLASTIC"/>
    <property type="match status" value="1"/>
</dbReference>
<dbReference type="PANTHER" id="PTHR42823:SF3">
    <property type="entry name" value="ATP SYNTHASE SUBUNIT A, CHLOROPLASTIC"/>
    <property type="match status" value="1"/>
</dbReference>
<dbReference type="Pfam" id="PF00119">
    <property type="entry name" value="ATP-synt_A"/>
    <property type="match status" value="1"/>
</dbReference>
<dbReference type="SUPFAM" id="SSF81336">
    <property type="entry name" value="F1F0 ATP synthase subunit A"/>
    <property type="match status" value="1"/>
</dbReference>
<dbReference type="PROSITE" id="PS00449">
    <property type="entry name" value="ATPASE_A"/>
    <property type="match status" value="1"/>
</dbReference>
<accession>B9MB97</accession>
<name>ATP6_ACIET</name>
<feature type="chain" id="PRO_1000184279" description="ATP synthase subunit a">
    <location>
        <begin position="1"/>
        <end position="287"/>
    </location>
</feature>
<feature type="transmembrane region" description="Helical" evidence="1">
    <location>
        <begin position="37"/>
        <end position="57"/>
    </location>
</feature>
<feature type="transmembrane region" description="Helical" evidence="1">
    <location>
        <begin position="96"/>
        <end position="116"/>
    </location>
</feature>
<feature type="transmembrane region" description="Helical" evidence="1">
    <location>
        <begin position="144"/>
        <end position="164"/>
    </location>
</feature>
<feature type="transmembrane region" description="Helical" evidence="1">
    <location>
        <begin position="187"/>
        <end position="207"/>
    </location>
</feature>
<feature type="transmembrane region" description="Helical" evidence="1">
    <location>
        <begin position="224"/>
        <end position="244"/>
    </location>
</feature>
<feature type="transmembrane region" description="Helical" evidence="1">
    <location>
        <begin position="266"/>
        <end position="286"/>
    </location>
</feature>
<sequence>MAADAHAPTASEYIVHHLQHLQNIKQKSIIDFSVVNLDSVAVSVILGVLGLFVMWLAARTATSGVPGRFQAAVEMLVEMVDNQAKANIHNAQSRKFIAPLALTVFVWIFLMNAMDLLPVDLLPVLWQGATGDSHAYLRVVPTADLSTTLGLSSAVLILCFVYSIKIKGMGGWAHELVTAPFGTSKNPVFALILGVVNLLMQIIEYVAKTVSHGMRLFGNMYAGELVFMLIALMGGAAAMSLSGVLLPVGHIIAGSIWAIFHILIITLQAFIFMMLTLIYLGQAHEAH</sequence>
<comment type="function">
    <text evidence="1">Key component of the proton channel; it plays a direct role in the translocation of protons across the membrane.</text>
</comment>
<comment type="subunit">
    <text evidence="1">F-type ATPases have 2 components, CF(1) - the catalytic core - and CF(0) - the membrane proton channel. CF(1) has five subunits: alpha(3), beta(3), gamma(1), delta(1), epsilon(1). CF(0) has three main subunits: a(1), b(2) and c(9-12). The alpha and beta chains form an alternating ring which encloses part of the gamma chain. CF(1) is attached to CF(0) by a central stalk formed by the gamma and epsilon chains, while a peripheral stalk is formed by the delta and b chains.</text>
</comment>
<comment type="subcellular location">
    <subcellularLocation>
        <location evidence="1">Cell inner membrane</location>
        <topology evidence="1">Multi-pass membrane protein</topology>
    </subcellularLocation>
</comment>
<comment type="similarity">
    <text evidence="1">Belongs to the ATPase A chain family.</text>
</comment>
<proteinExistence type="inferred from homology"/>
<evidence type="ECO:0000255" key="1">
    <source>
        <dbReference type="HAMAP-Rule" id="MF_01393"/>
    </source>
</evidence>
<protein>
    <recommendedName>
        <fullName evidence="1">ATP synthase subunit a</fullName>
    </recommendedName>
    <alternativeName>
        <fullName evidence="1">ATP synthase F0 sector subunit a</fullName>
    </alternativeName>
    <alternativeName>
        <fullName evidence="1">F-ATPase subunit 6</fullName>
    </alternativeName>
</protein>
<organism>
    <name type="scientific">Acidovorax ebreus (strain TPSY)</name>
    <name type="common">Diaphorobacter sp. (strain TPSY)</name>
    <dbReference type="NCBI Taxonomy" id="535289"/>
    <lineage>
        <taxon>Bacteria</taxon>
        <taxon>Pseudomonadati</taxon>
        <taxon>Pseudomonadota</taxon>
        <taxon>Betaproteobacteria</taxon>
        <taxon>Burkholderiales</taxon>
        <taxon>Comamonadaceae</taxon>
        <taxon>Diaphorobacter</taxon>
    </lineage>
</organism>
<reference key="1">
    <citation type="submission" date="2009-01" db="EMBL/GenBank/DDBJ databases">
        <title>Complete sequence of Diaphorobacter sp. TPSY.</title>
        <authorList>
            <consortium name="US DOE Joint Genome Institute"/>
            <person name="Lucas S."/>
            <person name="Copeland A."/>
            <person name="Lapidus A."/>
            <person name="Glavina del Rio T."/>
            <person name="Tice H."/>
            <person name="Bruce D."/>
            <person name="Goodwin L."/>
            <person name="Pitluck S."/>
            <person name="Chertkov O."/>
            <person name="Brettin T."/>
            <person name="Detter J.C."/>
            <person name="Han C."/>
            <person name="Larimer F."/>
            <person name="Land M."/>
            <person name="Hauser L."/>
            <person name="Kyrpides N."/>
            <person name="Mikhailova N."/>
            <person name="Coates J.D."/>
        </authorList>
    </citation>
    <scope>NUCLEOTIDE SEQUENCE [LARGE SCALE GENOMIC DNA]</scope>
    <source>
        <strain>TPSY</strain>
    </source>
</reference>
<gene>
    <name evidence="1" type="primary">atpB</name>
    <name type="ordered locus">Dtpsy_0297</name>
</gene>
<keyword id="KW-0066">ATP synthesis</keyword>
<keyword id="KW-0997">Cell inner membrane</keyword>
<keyword id="KW-1003">Cell membrane</keyword>
<keyword id="KW-0138">CF(0)</keyword>
<keyword id="KW-0375">Hydrogen ion transport</keyword>
<keyword id="KW-0406">Ion transport</keyword>
<keyword id="KW-0472">Membrane</keyword>
<keyword id="KW-1185">Reference proteome</keyword>
<keyword id="KW-0812">Transmembrane</keyword>
<keyword id="KW-1133">Transmembrane helix</keyword>
<keyword id="KW-0813">Transport</keyword>